<reference key="1">
    <citation type="journal article" date="2004" name="Nature">
        <title>Genome evolution in yeasts.</title>
        <authorList>
            <person name="Dujon B."/>
            <person name="Sherman D."/>
            <person name="Fischer G."/>
            <person name="Durrens P."/>
            <person name="Casaregola S."/>
            <person name="Lafontaine I."/>
            <person name="de Montigny J."/>
            <person name="Marck C."/>
            <person name="Neuveglise C."/>
            <person name="Talla E."/>
            <person name="Goffard N."/>
            <person name="Frangeul L."/>
            <person name="Aigle M."/>
            <person name="Anthouard V."/>
            <person name="Babour A."/>
            <person name="Barbe V."/>
            <person name="Barnay S."/>
            <person name="Blanchin S."/>
            <person name="Beckerich J.-M."/>
            <person name="Beyne E."/>
            <person name="Bleykasten C."/>
            <person name="Boisrame A."/>
            <person name="Boyer J."/>
            <person name="Cattolico L."/>
            <person name="Confanioleri F."/>
            <person name="de Daruvar A."/>
            <person name="Despons L."/>
            <person name="Fabre E."/>
            <person name="Fairhead C."/>
            <person name="Ferry-Dumazet H."/>
            <person name="Groppi A."/>
            <person name="Hantraye F."/>
            <person name="Hennequin C."/>
            <person name="Jauniaux N."/>
            <person name="Joyet P."/>
            <person name="Kachouri R."/>
            <person name="Kerrest A."/>
            <person name="Koszul R."/>
            <person name="Lemaire M."/>
            <person name="Lesur I."/>
            <person name="Ma L."/>
            <person name="Muller H."/>
            <person name="Nicaud J.-M."/>
            <person name="Nikolski M."/>
            <person name="Oztas S."/>
            <person name="Ozier-Kalogeropoulos O."/>
            <person name="Pellenz S."/>
            <person name="Potier S."/>
            <person name="Richard G.-F."/>
            <person name="Straub M.-L."/>
            <person name="Suleau A."/>
            <person name="Swennen D."/>
            <person name="Tekaia F."/>
            <person name="Wesolowski-Louvel M."/>
            <person name="Westhof E."/>
            <person name="Wirth B."/>
            <person name="Zeniou-Meyer M."/>
            <person name="Zivanovic Y."/>
            <person name="Bolotin-Fukuhara M."/>
            <person name="Thierry A."/>
            <person name="Bouchier C."/>
            <person name="Caudron B."/>
            <person name="Scarpelli C."/>
            <person name="Gaillardin C."/>
            <person name="Weissenbach J."/>
            <person name="Wincker P."/>
            <person name="Souciet J.-L."/>
        </authorList>
    </citation>
    <scope>NUCLEOTIDE SEQUENCE [LARGE SCALE GENOMIC DNA]</scope>
    <source>
        <strain>ATCC 2001 / BCRC 20586 / JCM 3761 / NBRC 0622 / NRRL Y-65 / CBS 138</strain>
    </source>
</reference>
<reference key="2">
    <citation type="journal article" date="2008" name="FEBS J.">
        <title>2,5-diamino-6-ribitylamino-4(3H)-pyrimidinone 5'-phosphate synthases of fungi and archaea.</title>
        <authorList>
            <person name="Romisch-Margl W."/>
            <person name="Eisenreich W."/>
            <person name="Haase I."/>
            <person name="Bacher A."/>
            <person name="Fischer M."/>
        </authorList>
    </citation>
    <scope>FUNCTION</scope>
    <scope>CATALYTIC ACTIVITY</scope>
    <scope>REACTION STEREOSPECIFICITY</scope>
    <scope>SUBUNIT</scope>
</reference>
<comment type="function">
    <text evidence="2">Catalyzes an early step in riboflavin biosynthesis, the NADPH-dependent reduction of the ribose side chain of 2,5-diamino-6-ribosylamino-4(3H)-pyrimidinone 5'-phosphate, yielding 2,5-diamino-6-ribitylamino-4(3H)-pyrimidinone 5'-phosphate.</text>
</comment>
<comment type="catalytic activity">
    <reaction evidence="2">
        <text>2,5-diamino-6-(1-D-ribitylamino)pyrimidin-4(3H)-one 5'-phosphate + NADP(+) = 2,5-diamino-6-(1-D-ribosylamino)pyrimidin-4(3H)-one 5'-phosphate + NADPH + H(+)</text>
        <dbReference type="Rhea" id="RHEA:27278"/>
        <dbReference type="ChEBI" id="CHEBI:15378"/>
        <dbReference type="ChEBI" id="CHEBI:57783"/>
        <dbReference type="ChEBI" id="CHEBI:58349"/>
        <dbReference type="ChEBI" id="CHEBI:58890"/>
        <dbReference type="ChEBI" id="CHEBI:59545"/>
        <dbReference type="EC" id="1.1.1.302"/>
    </reaction>
</comment>
<comment type="catalytic activity">
    <reaction evidence="2">
        <text>2,5-diamino-6-(1-D-ribitylamino)pyrimidin-4(3H)-one 5'-phosphate + NAD(+) = 2,5-diamino-6-(1-D-ribosylamino)pyrimidin-4(3H)-one 5'-phosphate + NADH + H(+)</text>
        <dbReference type="Rhea" id="RHEA:27274"/>
        <dbReference type="ChEBI" id="CHEBI:15378"/>
        <dbReference type="ChEBI" id="CHEBI:57540"/>
        <dbReference type="ChEBI" id="CHEBI:57945"/>
        <dbReference type="ChEBI" id="CHEBI:58890"/>
        <dbReference type="ChEBI" id="CHEBI:59545"/>
        <dbReference type="EC" id="1.1.1.302"/>
    </reaction>
</comment>
<comment type="pathway">
    <text>Cofactor biosynthesis; riboflavin biosynthesis.</text>
</comment>
<comment type="subunit">
    <text evidence="2">Homodimer.</text>
</comment>
<comment type="miscellaneous">
    <text>Using chirally deuterated NADPH, the enzyme was shown to be A-type reductase catalyzing the transfer of deuterium from the 4(R) position of NADPH to the 1' (S) position of the substrate.</text>
</comment>
<comment type="similarity">
    <text evidence="3">Belongs to the HTP reductase family.</text>
</comment>
<organism>
    <name type="scientific">Candida glabrata (strain ATCC 2001 / BCRC 20586 / JCM 3761 / NBRC 0622 / NRRL Y-65 / CBS 138)</name>
    <name type="common">Yeast</name>
    <name type="synonym">Nakaseomyces glabratus</name>
    <dbReference type="NCBI Taxonomy" id="284593"/>
    <lineage>
        <taxon>Eukaryota</taxon>
        <taxon>Fungi</taxon>
        <taxon>Dikarya</taxon>
        <taxon>Ascomycota</taxon>
        <taxon>Saccharomycotina</taxon>
        <taxon>Saccharomycetes</taxon>
        <taxon>Saccharomycetales</taxon>
        <taxon>Saccharomycetaceae</taxon>
        <taxon>Nakaseomyces</taxon>
    </lineage>
</organism>
<accession>Q6FU96</accession>
<keyword id="KW-0521">NADP</keyword>
<keyword id="KW-0560">Oxidoreductase</keyword>
<keyword id="KW-1185">Reference proteome</keyword>
<keyword id="KW-0686">Riboflavin biosynthesis</keyword>
<proteinExistence type="evidence at protein level"/>
<sequence length="244" mass="27568">MLRVRDDLPPFLKNYLPDGHRNGRPFVTLTYAQSIDAKIAKQRGVRTTISHIETKEMTHYLRYFHDGILIGSGTVLADDPGLNCKWIGPNNDPDESMEEKSPRPIILDPKLKWKYSGSKMEELCNQGMGKPPIVITTKTPKVKEANVEYMIMEPDANDRISWKSILDTLRRNYDMKSVMIEGGSHVINQLLMCSDLIDSLIVTIGSIYLGSEGVTVSPPDEVKLKDISWWKGTSDVVMCSRLQN</sequence>
<gene>
    <name type="primary">RIB7</name>
    <name type="ordered locus">CAGL0F05203g</name>
</gene>
<protein>
    <recommendedName>
        <fullName>2,5-diamino-6-ribosylamino-4(3H)-pyrimidinone 5'-phosphate reductase</fullName>
        <shortName>DAROPP reductase</shortName>
        <shortName>DARP reductase</shortName>
        <ecNumber>1.1.1.302</ecNumber>
    </recommendedName>
    <alternativeName>
        <fullName>2,5-diamino-6-(5-phospho-D-ribosylamino)pyrimidin-4(3H)-one reductase</fullName>
    </alternativeName>
    <alternativeName>
        <fullName>2,5-diamino-6-ribitylamino-4(3H)-pyrimidinone 5'-phosphate synthase</fullName>
        <shortName>DARIPP synthase</shortName>
    </alternativeName>
    <alternativeName>
        <fullName>CglRED</fullName>
    </alternativeName>
</protein>
<name>RIB7_CANGA</name>
<dbReference type="EC" id="1.1.1.302"/>
<dbReference type="EMBL" id="CR380952">
    <property type="protein sequence ID" value="CAG59122.1"/>
    <property type="molecule type" value="Genomic_DNA"/>
</dbReference>
<dbReference type="RefSeq" id="XP_446198.1">
    <property type="nucleotide sequence ID" value="XM_446198.1"/>
</dbReference>
<dbReference type="SMR" id="Q6FU96"/>
<dbReference type="FunCoup" id="Q6FU96">
    <property type="interactions" value="119"/>
</dbReference>
<dbReference type="STRING" id="284593.Q6FU96"/>
<dbReference type="EnsemblFungi" id="CAGL0F05203g-T">
    <property type="protein sequence ID" value="CAGL0F05203g-T-p1"/>
    <property type="gene ID" value="CAGL0F05203g"/>
</dbReference>
<dbReference type="GeneID" id="2887749"/>
<dbReference type="KEGG" id="cgr:2887749"/>
<dbReference type="CGD" id="CAL0129209">
    <property type="gene designation" value="RIB7"/>
</dbReference>
<dbReference type="VEuPathDB" id="FungiDB:B1J91_F05203g"/>
<dbReference type="VEuPathDB" id="FungiDB:CAGL0F05203g"/>
<dbReference type="eggNOG" id="ENOG502RZWZ">
    <property type="taxonomic scope" value="Eukaryota"/>
</dbReference>
<dbReference type="HOGENOM" id="CLU_036590_5_0_1"/>
<dbReference type="InParanoid" id="Q6FU96"/>
<dbReference type="OMA" id="HYLRYHH"/>
<dbReference type="BRENDA" id="1.1.1.302">
    <property type="organism ID" value="1113"/>
</dbReference>
<dbReference type="UniPathway" id="UPA00275"/>
<dbReference type="Proteomes" id="UP000002428">
    <property type="component" value="Chromosome F"/>
</dbReference>
<dbReference type="GO" id="GO:0008703">
    <property type="term" value="F:5-amino-6-(5-phosphoribosylamino)uracil reductase activity"/>
    <property type="evidence" value="ECO:0007669"/>
    <property type="project" value="EnsemblFungi"/>
</dbReference>
<dbReference type="GO" id="GO:0050661">
    <property type="term" value="F:NADP binding"/>
    <property type="evidence" value="ECO:0000314"/>
    <property type="project" value="UniProtKB"/>
</dbReference>
<dbReference type="GO" id="GO:0016616">
    <property type="term" value="F:oxidoreductase activity, acting on the CH-OH group of donors, NAD or NADP as acceptor"/>
    <property type="evidence" value="ECO:0000314"/>
    <property type="project" value="UniProtKB"/>
</dbReference>
<dbReference type="GO" id="GO:0046983">
    <property type="term" value="F:protein dimerization activity"/>
    <property type="evidence" value="ECO:0000314"/>
    <property type="project" value="UniProtKB"/>
</dbReference>
<dbReference type="GO" id="GO:0009231">
    <property type="term" value="P:riboflavin biosynthetic process"/>
    <property type="evidence" value="ECO:0000314"/>
    <property type="project" value="UniProtKB"/>
</dbReference>
<dbReference type="FunFam" id="3.40.430.10:FF:000011">
    <property type="entry name" value="Rib7p"/>
    <property type="match status" value="1"/>
</dbReference>
<dbReference type="Gene3D" id="3.40.430.10">
    <property type="entry name" value="Dihydrofolate Reductase, subunit A"/>
    <property type="match status" value="1"/>
</dbReference>
<dbReference type="InterPro" id="IPR024072">
    <property type="entry name" value="DHFR-like_dom_sf"/>
</dbReference>
<dbReference type="InterPro" id="IPR011549">
    <property type="entry name" value="RibD_C"/>
</dbReference>
<dbReference type="InterPro" id="IPR002734">
    <property type="entry name" value="RibDG_C"/>
</dbReference>
<dbReference type="InterPro" id="IPR050765">
    <property type="entry name" value="Riboflavin_Biosynth_HTPR"/>
</dbReference>
<dbReference type="NCBIfam" id="TIGR00227">
    <property type="entry name" value="ribD_Cterm"/>
    <property type="match status" value="1"/>
</dbReference>
<dbReference type="PANTHER" id="PTHR38011:SF7">
    <property type="entry name" value="2,5-DIAMINO-6-RIBOSYLAMINO-4(3H)-PYRIMIDINONE 5'-PHOSPHATE REDUCTASE"/>
    <property type="match status" value="1"/>
</dbReference>
<dbReference type="PANTHER" id="PTHR38011">
    <property type="entry name" value="DIHYDROFOLATE REDUCTASE FAMILY PROTEIN (AFU_ORTHOLOGUE AFUA_8G06820)"/>
    <property type="match status" value="1"/>
</dbReference>
<dbReference type="Pfam" id="PF01872">
    <property type="entry name" value="RibD_C"/>
    <property type="match status" value="1"/>
</dbReference>
<dbReference type="SUPFAM" id="SSF53597">
    <property type="entry name" value="Dihydrofolate reductase-like"/>
    <property type="match status" value="1"/>
</dbReference>
<evidence type="ECO:0000250" key="1"/>
<evidence type="ECO:0000269" key="2">
    <source>
    </source>
</evidence>
<evidence type="ECO:0000305" key="3"/>
<feature type="chain" id="PRO_0000135937" description="2,5-diamino-6-ribosylamino-4(3H)-pyrimidinone 5'-phosphate reductase">
    <location>
        <begin position="1"/>
        <end position="244"/>
    </location>
</feature>
<feature type="binding site" evidence="1">
    <location>
        <position position="74"/>
    </location>
    <ligand>
        <name>NADP(+)</name>
        <dbReference type="ChEBI" id="CHEBI:58349"/>
    </ligand>
</feature>
<feature type="binding site" evidence="1">
    <location>
        <position position="78"/>
    </location>
    <ligand>
        <name>NADP(+)</name>
        <dbReference type="ChEBI" id="CHEBI:58349"/>
    </ligand>
</feature>
<feature type="binding site">
    <location>
        <position position="160"/>
    </location>
    <ligand>
        <name>NADP(+)</name>
        <dbReference type="ChEBI" id="CHEBI:58349"/>
    </ligand>
</feature>
<feature type="binding site" evidence="1">
    <location>
        <begin position="183"/>
        <end position="187"/>
    </location>
    <ligand>
        <name>NADP(+)</name>
        <dbReference type="ChEBI" id="CHEBI:58349"/>
    </ligand>
</feature>